<accession>A3M9H2</accession>
<reference key="1">
    <citation type="journal article" date="2007" name="Genes Dev.">
        <title>New insights into Acinetobacter baumannii pathogenesis revealed by high-density pyrosequencing and transposon mutagenesis.</title>
        <authorList>
            <person name="Smith M.G."/>
            <person name="Gianoulis T.A."/>
            <person name="Pukatzki S."/>
            <person name="Mekalanos J.J."/>
            <person name="Ornston L.N."/>
            <person name="Gerstein M."/>
            <person name="Snyder M."/>
        </authorList>
    </citation>
    <scope>NUCLEOTIDE SEQUENCE [LARGE SCALE GENOMIC DNA]</scope>
    <source>
        <strain>ATCC 17978 / DSM 105126 / CIP 53.77 / LMG 1025 / NCDC KC755 / 5377</strain>
    </source>
</reference>
<keyword id="KW-0004">4Fe-4S</keyword>
<keyword id="KW-0408">Iron</keyword>
<keyword id="KW-0411">Iron-sulfur</keyword>
<keyword id="KW-0414">Isoprene biosynthesis</keyword>
<keyword id="KW-0479">Metal-binding</keyword>
<keyword id="KW-0560">Oxidoreductase</keyword>
<feature type="chain" id="PRO_1000098925" description="4-hydroxy-3-methylbut-2-enyl diphosphate reductase">
    <location>
        <begin position="1"/>
        <end position="316"/>
    </location>
</feature>
<feature type="active site" description="Proton donor" evidence="1">
    <location>
        <position position="126"/>
    </location>
</feature>
<feature type="binding site" evidence="1">
    <location>
        <position position="12"/>
    </location>
    <ligand>
        <name>[4Fe-4S] cluster</name>
        <dbReference type="ChEBI" id="CHEBI:49883"/>
    </ligand>
</feature>
<feature type="binding site" evidence="1">
    <location>
        <position position="41"/>
    </location>
    <ligand>
        <name>(2E)-4-hydroxy-3-methylbut-2-enyl diphosphate</name>
        <dbReference type="ChEBI" id="CHEBI:128753"/>
    </ligand>
</feature>
<feature type="binding site" evidence="1">
    <location>
        <position position="41"/>
    </location>
    <ligand>
        <name>dimethylallyl diphosphate</name>
        <dbReference type="ChEBI" id="CHEBI:57623"/>
    </ligand>
</feature>
<feature type="binding site" evidence="1">
    <location>
        <position position="41"/>
    </location>
    <ligand>
        <name>isopentenyl diphosphate</name>
        <dbReference type="ChEBI" id="CHEBI:128769"/>
    </ligand>
</feature>
<feature type="binding site" evidence="1">
    <location>
        <position position="74"/>
    </location>
    <ligand>
        <name>(2E)-4-hydroxy-3-methylbut-2-enyl diphosphate</name>
        <dbReference type="ChEBI" id="CHEBI:128753"/>
    </ligand>
</feature>
<feature type="binding site" evidence="1">
    <location>
        <position position="74"/>
    </location>
    <ligand>
        <name>dimethylallyl diphosphate</name>
        <dbReference type="ChEBI" id="CHEBI:57623"/>
    </ligand>
</feature>
<feature type="binding site" evidence="1">
    <location>
        <position position="74"/>
    </location>
    <ligand>
        <name>isopentenyl diphosphate</name>
        <dbReference type="ChEBI" id="CHEBI:128769"/>
    </ligand>
</feature>
<feature type="binding site" evidence="1">
    <location>
        <position position="96"/>
    </location>
    <ligand>
        <name>[4Fe-4S] cluster</name>
        <dbReference type="ChEBI" id="CHEBI:49883"/>
    </ligand>
</feature>
<feature type="binding site" evidence="1">
    <location>
        <position position="124"/>
    </location>
    <ligand>
        <name>(2E)-4-hydroxy-3-methylbut-2-enyl diphosphate</name>
        <dbReference type="ChEBI" id="CHEBI:128753"/>
    </ligand>
</feature>
<feature type="binding site" evidence="1">
    <location>
        <position position="124"/>
    </location>
    <ligand>
        <name>dimethylallyl diphosphate</name>
        <dbReference type="ChEBI" id="CHEBI:57623"/>
    </ligand>
</feature>
<feature type="binding site" evidence="1">
    <location>
        <position position="124"/>
    </location>
    <ligand>
        <name>isopentenyl diphosphate</name>
        <dbReference type="ChEBI" id="CHEBI:128769"/>
    </ligand>
</feature>
<feature type="binding site" evidence="1">
    <location>
        <position position="168"/>
    </location>
    <ligand>
        <name>(2E)-4-hydroxy-3-methylbut-2-enyl diphosphate</name>
        <dbReference type="ChEBI" id="CHEBI:128753"/>
    </ligand>
</feature>
<feature type="binding site" evidence="1">
    <location>
        <position position="198"/>
    </location>
    <ligand>
        <name>[4Fe-4S] cluster</name>
        <dbReference type="ChEBI" id="CHEBI:49883"/>
    </ligand>
</feature>
<feature type="binding site" evidence="1">
    <location>
        <position position="226"/>
    </location>
    <ligand>
        <name>(2E)-4-hydroxy-3-methylbut-2-enyl diphosphate</name>
        <dbReference type="ChEBI" id="CHEBI:128753"/>
    </ligand>
</feature>
<feature type="binding site" evidence="1">
    <location>
        <position position="226"/>
    </location>
    <ligand>
        <name>dimethylallyl diphosphate</name>
        <dbReference type="ChEBI" id="CHEBI:57623"/>
    </ligand>
</feature>
<feature type="binding site" evidence="1">
    <location>
        <position position="226"/>
    </location>
    <ligand>
        <name>isopentenyl diphosphate</name>
        <dbReference type="ChEBI" id="CHEBI:128769"/>
    </ligand>
</feature>
<feature type="binding site" evidence="1">
    <location>
        <position position="227"/>
    </location>
    <ligand>
        <name>(2E)-4-hydroxy-3-methylbut-2-enyl diphosphate</name>
        <dbReference type="ChEBI" id="CHEBI:128753"/>
    </ligand>
</feature>
<feature type="binding site" evidence="1">
    <location>
        <position position="227"/>
    </location>
    <ligand>
        <name>dimethylallyl diphosphate</name>
        <dbReference type="ChEBI" id="CHEBI:57623"/>
    </ligand>
</feature>
<feature type="binding site" evidence="1">
    <location>
        <position position="227"/>
    </location>
    <ligand>
        <name>isopentenyl diphosphate</name>
        <dbReference type="ChEBI" id="CHEBI:128769"/>
    </ligand>
</feature>
<feature type="binding site" evidence="1">
    <location>
        <position position="228"/>
    </location>
    <ligand>
        <name>(2E)-4-hydroxy-3-methylbut-2-enyl diphosphate</name>
        <dbReference type="ChEBI" id="CHEBI:128753"/>
    </ligand>
</feature>
<feature type="binding site" evidence="1">
    <location>
        <position position="228"/>
    </location>
    <ligand>
        <name>dimethylallyl diphosphate</name>
        <dbReference type="ChEBI" id="CHEBI:57623"/>
    </ligand>
</feature>
<feature type="binding site" evidence="1">
    <location>
        <position position="228"/>
    </location>
    <ligand>
        <name>isopentenyl diphosphate</name>
        <dbReference type="ChEBI" id="CHEBI:128769"/>
    </ligand>
</feature>
<feature type="binding site" evidence="1">
    <location>
        <position position="270"/>
    </location>
    <ligand>
        <name>(2E)-4-hydroxy-3-methylbut-2-enyl diphosphate</name>
        <dbReference type="ChEBI" id="CHEBI:128753"/>
    </ligand>
</feature>
<feature type="binding site" evidence="1">
    <location>
        <position position="270"/>
    </location>
    <ligand>
        <name>dimethylallyl diphosphate</name>
        <dbReference type="ChEBI" id="CHEBI:57623"/>
    </ligand>
</feature>
<feature type="binding site" evidence="1">
    <location>
        <position position="270"/>
    </location>
    <ligand>
        <name>isopentenyl diphosphate</name>
        <dbReference type="ChEBI" id="CHEBI:128769"/>
    </ligand>
</feature>
<evidence type="ECO:0000255" key="1">
    <source>
        <dbReference type="HAMAP-Rule" id="MF_00191"/>
    </source>
</evidence>
<protein>
    <recommendedName>
        <fullName evidence="1">4-hydroxy-3-methylbut-2-enyl diphosphate reductase</fullName>
        <shortName evidence="1">HMBPP reductase</shortName>
        <ecNumber evidence="1">1.17.7.4</ecNumber>
    </recommendedName>
</protein>
<sequence length="316" mass="35037">MEIVLANPRGFCAGVDRAIAIVNRALECFNPPIYVRHEVVHNKFVVDDLRQRGAVFVDELDQVPDDSIVIFSAHGVSKAVQQEAERRGLKVFDATCPLVTKVHIEVTKYAREGTEAILIGHEGHPEVEGTMGQYDKLKGGDIYLVEDEADVAALEVRHPEKLAFVTQTTLSIDDTAKVIDALRAKFPNIQGPRKDDICYATQNRQDAVRDLAEKCDVVLVVGSPNSSNSNRLRELAERMGKAAYLVDNADQLEQSWFNDTCKIGVTAGASAPEILIKQVIQRLQDWGAQAPKELEGREENITFSLPKELRIHVTQA</sequence>
<gene>
    <name evidence="1" type="primary">ispH</name>
    <name type="ordered locus">A1S_3169</name>
</gene>
<name>ISPH_ACIBT</name>
<comment type="function">
    <text evidence="1">Catalyzes the conversion of 1-hydroxy-2-methyl-2-(E)-butenyl 4-diphosphate (HMBPP) into a mixture of isopentenyl diphosphate (IPP) and dimethylallyl diphosphate (DMAPP). Acts in the terminal step of the DOXP/MEP pathway for isoprenoid precursor biosynthesis.</text>
</comment>
<comment type="catalytic activity">
    <reaction evidence="1">
        <text>isopentenyl diphosphate + 2 oxidized [2Fe-2S]-[ferredoxin] + H2O = (2E)-4-hydroxy-3-methylbut-2-enyl diphosphate + 2 reduced [2Fe-2S]-[ferredoxin] + 2 H(+)</text>
        <dbReference type="Rhea" id="RHEA:24488"/>
        <dbReference type="Rhea" id="RHEA-COMP:10000"/>
        <dbReference type="Rhea" id="RHEA-COMP:10001"/>
        <dbReference type="ChEBI" id="CHEBI:15377"/>
        <dbReference type="ChEBI" id="CHEBI:15378"/>
        <dbReference type="ChEBI" id="CHEBI:33737"/>
        <dbReference type="ChEBI" id="CHEBI:33738"/>
        <dbReference type="ChEBI" id="CHEBI:128753"/>
        <dbReference type="ChEBI" id="CHEBI:128769"/>
        <dbReference type="EC" id="1.17.7.4"/>
    </reaction>
</comment>
<comment type="catalytic activity">
    <reaction evidence="1">
        <text>dimethylallyl diphosphate + 2 oxidized [2Fe-2S]-[ferredoxin] + H2O = (2E)-4-hydroxy-3-methylbut-2-enyl diphosphate + 2 reduced [2Fe-2S]-[ferredoxin] + 2 H(+)</text>
        <dbReference type="Rhea" id="RHEA:24825"/>
        <dbReference type="Rhea" id="RHEA-COMP:10000"/>
        <dbReference type="Rhea" id="RHEA-COMP:10001"/>
        <dbReference type="ChEBI" id="CHEBI:15377"/>
        <dbReference type="ChEBI" id="CHEBI:15378"/>
        <dbReference type="ChEBI" id="CHEBI:33737"/>
        <dbReference type="ChEBI" id="CHEBI:33738"/>
        <dbReference type="ChEBI" id="CHEBI:57623"/>
        <dbReference type="ChEBI" id="CHEBI:128753"/>
        <dbReference type="EC" id="1.17.7.4"/>
    </reaction>
</comment>
<comment type="cofactor">
    <cofactor evidence="1">
        <name>[4Fe-4S] cluster</name>
        <dbReference type="ChEBI" id="CHEBI:49883"/>
    </cofactor>
    <text evidence="1">Binds 1 [4Fe-4S] cluster per subunit.</text>
</comment>
<comment type="pathway">
    <text evidence="1">Isoprenoid biosynthesis; dimethylallyl diphosphate biosynthesis; dimethylallyl diphosphate from (2E)-4-hydroxy-3-methylbutenyl diphosphate: step 1/1.</text>
</comment>
<comment type="pathway">
    <text evidence="1">Isoprenoid biosynthesis; isopentenyl diphosphate biosynthesis via DXP pathway; isopentenyl diphosphate from 1-deoxy-D-xylulose 5-phosphate: step 6/6.</text>
</comment>
<comment type="similarity">
    <text evidence="1">Belongs to the IspH family.</text>
</comment>
<proteinExistence type="inferred from homology"/>
<dbReference type="EC" id="1.17.7.4" evidence="1"/>
<dbReference type="EMBL" id="CP000521">
    <property type="protein sequence ID" value="ABO13566.2"/>
    <property type="molecule type" value="Genomic_DNA"/>
</dbReference>
<dbReference type="RefSeq" id="WP_000407064.1">
    <property type="nucleotide sequence ID" value="NZ_CP053098.1"/>
</dbReference>
<dbReference type="SMR" id="A3M9H2"/>
<dbReference type="GeneID" id="92895407"/>
<dbReference type="KEGG" id="acb:A1S_3169"/>
<dbReference type="HOGENOM" id="CLU_027486_1_0_6"/>
<dbReference type="UniPathway" id="UPA00056">
    <property type="reaction ID" value="UER00097"/>
</dbReference>
<dbReference type="UniPathway" id="UPA00059">
    <property type="reaction ID" value="UER00105"/>
</dbReference>
<dbReference type="GO" id="GO:0051539">
    <property type="term" value="F:4 iron, 4 sulfur cluster binding"/>
    <property type="evidence" value="ECO:0007669"/>
    <property type="project" value="UniProtKB-UniRule"/>
</dbReference>
<dbReference type="GO" id="GO:0051745">
    <property type="term" value="F:4-hydroxy-3-methylbut-2-enyl diphosphate reductase activity"/>
    <property type="evidence" value="ECO:0007669"/>
    <property type="project" value="UniProtKB-UniRule"/>
</dbReference>
<dbReference type="GO" id="GO:0046872">
    <property type="term" value="F:metal ion binding"/>
    <property type="evidence" value="ECO:0007669"/>
    <property type="project" value="UniProtKB-KW"/>
</dbReference>
<dbReference type="GO" id="GO:0050992">
    <property type="term" value="P:dimethylallyl diphosphate biosynthetic process"/>
    <property type="evidence" value="ECO:0007669"/>
    <property type="project" value="UniProtKB-UniRule"/>
</dbReference>
<dbReference type="GO" id="GO:0019288">
    <property type="term" value="P:isopentenyl diphosphate biosynthetic process, methylerythritol 4-phosphate pathway"/>
    <property type="evidence" value="ECO:0007669"/>
    <property type="project" value="UniProtKB-UniRule"/>
</dbReference>
<dbReference type="GO" id="GO:0016114">
    <property type="term" value="P:terpenoid biosynthetic process"/>
    <property type="evidence" value="ECO:0007669"/>
    <property type="project" value="UniProtKB-UniRule"/>
</dbReference>
<dbReference type="CDD" id="cd13944">
    <property type="entry name" value="lytB_ispH"/>
    <property type="match status" value="1"/>
</dbReference>
<dbReference type="Gene3D" id="3.40.50.11270">
    <property type="match status" value="1"/>
</dbReference>
<dbReference type="Gene3D" id="3.40.1010.20">
    <property type="entry name" value="4-hydroxy-3-methylbut-2-enyl diphosphate reductase, catalytic domain"/>
    <property type="match status" value="2"/>
</dbReference>
<dbReference type="HAMAP" id="MF_00191">
    <property type="entry name" value="IspH"/>
    <property type="match status" value="1"/>
</dbReference>
<dbReference type="InterPro" id="IPR003451">
    <property type="entry name" value="LytB/IspH"/>
</dbReference>
<dbReference type="NCBIfam" id="TIGR00216">
    <property type="entry name" value="ispH_lytB"/>
    <property type="match status" value="1"/>
</dbReference>
<dbReference type="NCBIfam" id="NF002188">
    <property type="entry name" value="PRK01045.1-2"/>
    <property type="match status" value="1"/>
</dbReference>
<dbReference type="NCBIfam" id="NF002190">
    <property type="entry name" value="PRK01045.1-4"/>
    <property type="match status" value="1"/>
</dbReference>
<dbReference type="PANTHER" id="PTHR30426">
    <property type="entry name" value="4-HYDROXY-3-METHYLBUT-2-ENYL DIPHOSPHATE REDUCTASE"/>
    <property type="match status" value="1"/>
</dbReference>
<dbReference type="PANTHER" id="PTHR30426:SF0">
    <property type="entry name" value="4-HYDROXY-3-METHYLBUT-2-ENYL DIPHOSPHATE REDUCTASE"/>
    <property type="match status" value="1"/>
</dbReference>
<dbReference type="Pfam" id="PF02401">
    <property type="entry name" value="LYTB"/>
    <property type="match status" value="1"/>
</dbReference>
<organism>
    <name type="scientific">Acinetobacter baumannii (strain ATCC 17978 / DSM 105126 / CIP 53.77 / LMG 1025 / NCDC KC755 / 5377)</name>
    <dbReference type="NCBI Taxonomy" id="400667"/>
    <lineage>
        <taxon>Bacteria</taxon>
        <taxon>Pseudomonadati</taxon>
        <taxon>Pseudomonadota</taxon>
        <taxon>Gammaproteobacteria</taxon>
        <taxon>Moraxellales</taxon>
        <taxon>Moraxellaceae</taxon>
        <taxon>Acinetobacter</taxon>
        <taxon>Acinetobacter calcoaceticus/baumannii complex</taxon>
    </lineage>
</organism>